<dbReference type="EMBL" id="AL022141">
    <property type="protein sequence ID" value="CAA18130.1"/>
    <property type="molecule type" value="Genomic_DNA"/>
</dbReference>
<dbReference type="EMBL" id="AL161589">
    <property type="protein sequence ID" value="CAB80295.1"/>
    <property type="molecule type" value="Genomic_DNA"/>
</dbReference>
<dbReference type="EMBL" id="CP002687">
    <property type="protein sequence ID" value="AEE86638.1"/>
    <property type="molecule type" value="Genomic_DNA"/>
</dbReference>
<dbReference type="EMBL" id="AY072434">
    <property type="protein sequence ID" value="AAL62426.1"/>
    <property type="molecule type" value="mRNA"/>
</dbReference>
<dbReference type="EMBL" id="AY114720">
    <property type="protein sequence ID" value="AAM48039.1"/>
    <property type="molecule type" value="mRNA"/>
</dbReference>
<dbReference type="PIR" id="T04593">
    <property type="entry name" value="T04593"/>
</dbReference>
<dbReference type="RefSeq" id="NP_195347.1">
    <property type="nucleotide sequence ID" value="NM_119792.4"/>
</dbReference>
<dbReference type="SMR" id="O65515"/>
<dbReference type="BioGRID" id="15063">
    <property type="interactions" value="5"/>
</dbReference>
<dbReference type="FunCoup" id="O65515">
    <property type="interactions" value="3"/>
</dbReference>
<dbReference type="IntAct" id="O65515">
    <property type="interactions" value="5"/>
</dbReference>
<dbReference type="STRING" id="3702.O65515"/>
<dbReference type="PaxDb" id="3702-AT4G36240.1"/>
<dbReference type="EnsemblPlants" id="AT4G36240.1">
    <property type="protein sequence ID" value="AT4G36240.1"/>
    <property type="gene ID" value="AT4G36240"/>
</dbReference>
<dbReference type="GeneID" id="829781"/>
<dbReference type="Gramene" id="AT4G36240.1">
    <property type="protein sequence ID" value="AT4G36240.1"/>
    <property type="gene ID" value="AT4G36240"/>
</dbReference>
<dbReference type="KEGG" id="ath:AT4G36240"/>
<dbReference type="Araport" id="AT4G36240"/>
<dbReference type="TAIR" id="AT4G36240">
    <property type="gene designation" value="GATA7"/>
</dbReference>
<dbReference type="eggNOG" id="KOG1601">
    <property type="taxonomic scope" value="Eukaryota"/>
</dbReference>
<dbReference type="HOGENOM" id="CLU_045755_1_1_1"/>
<dbReference type="InParanoid" id="O65515"/>
<dbReference type="OMA" id="IWCVTGI"/>
<dbReference type="OrthoDB" id="2162994at2759"/>
<dbReference type="PhylomeDB" id="O65515"/>
<dbReference type="PRO" id="PR:O65515"/>
<dbReference type="Proteomes" id="UP000006548">
    <property type="component" value="Chromosome 4"/>
</dbReference>
<dbReference type="ExpressionAtlas" id="O65515">
    <property type="expression patterns" value="baseline and differential"/>
</dbReference>
<dbReference type="GO" id="GO:0005634">
    <property type="term" value="C:nucleus"/>
    <property type="evidence" value="ECO:0007669"/>
    <property type="project" value="UniProtKB-SubCell"/>
</dbReference>
<dbReference type="GO" id="GO:0003700">
    <property type="term" value="F:DNA-binding transcription factor activity"/>
    <property type="evidence" value="ECO:0000250"/>
    <property type="project" value="TAIR"/>
</dbReference>
<dbReference type="GO" id="GO:0043565">
    <property type="term" value="F:sequence-specific DNA binding"/>
    <property type="evidence" value="ECO:0007669"/>
    <property type="project" value="InterPro"/>
</dbReference>
<dbReference type="GO" id="GO:0008270">
    <property type="term" value="F:zinc ion binding"/>
    <property type="evidence" value="ECO:0007669"/>
    <property type="project" value="UniProtKB-KW"/>
</dbReference>
<dbReference type="GO" id="GO:0007623">
    <property type="term" value="P:circadian rhythm"/>
    <property type="evidence" value="ECO:0000270"/>
    <property type="project" value="TAIR"/>
</dbReference>
<dbReference type="GO" id="GO:0045893">
    <property type="term" value="P:positive regulation of DNA-templated transcription"/>
    <property type="evidence" value="ECO:0007669"/>
    <property type="project" value="InterPro"/>
</dbReference>
<dbReference type="GO" id="GO:0009416">
    <property type="term" value="P:response to light stimulus"/>
    <property type="evidence" value="ECO:0000270"/>
    <property type="project" value="TAIR"/>
</dbReference>
<dbReference type="CDD" id="cd00202">
    <property type="entry name" value="ZnF_GATA"/>
    <property type="match status" value="1"/>
</dbReference>
<dbReference type="FunFam" id="3.30.50.10:FF:000018">
    <property type="entry name" value="GATA transcription factor"/>
    <property type="match status" value="1"/>
</dbReference>
<dbReference type="Gene3D" id="3.30.50.10">
    <property type="entry name" value="Erythroid Transcription Factor GATA-1, subunit A"/>
    <property type="match status" value="1"/>
</dbReference>
<dbReference type="InterPro" id="IPR051140">
    <property type="entry name" value="GATA_TF"/>
</dbReference>
<dbReference type="InterPro" id="IPR016679">
    <property type="entry name" value="TF_GATA_pln"/>
</dbReference>
<dbReference type="InterPro" id="IPR000679">
    <property type="entry name" value="Znf_GATA"/>
</dbReference>
<dbReference type="InterPro" id="IPR013088">
    <property type="entry name" value="Znf_NHR/GATA"/>
</dbReference>
<dbReference type="PANTHER" id="PTHR45658">
    <property type="entry name" value="GATA TRANSCRIPTION FACTOR"/>
    <property type="match status" value="1"/>
</dbReference>
<dbReference type="PANTHER" id="PTHR45658:SF105">
    <property type="entry name" value="GATA TRANSCRIPTION FACTOR 7"/>
    <property type="match status" value="1"/>
</dbReference>
<dbReference type="Pfam" id="PF00320">
    <property type="entry name" value="GATA"/>
    <property type="match status" value="1"/>
</dbReference>
<dbReference type="PIRSF" id="PIRSF016992">
    <property type="entry name" value="TF_GATA_plant"/>
    <property type="match status" value="1"/>
</dbReference>
<dbReference type="SMART" id="SM00401">
    <property type="entry name" value="ZnF_GATA"/>
    <property type="match status" value="1"/>
</dbReference>
<dbReference type="SUPFAM" id="SSF57716">
    <property type="entry name" value="Glucocorticoid receptor-like (DNA-binding domain)"/>
    <property type="match status" value="1"/>
</dbReference>
<dbReference type="PROSITE" id="PS00344">
    <property type="entry name" value="GATA_ZN_FINGER_1"/>
    <property type="match status" value="1"/>
</dbReference>
<dbReference type="PROSITE" id="PS50114">
    <property type="entry name" value="GATA_ZN_FINGER_2"/>
    <property type="match status" value="1"/>
</dbReference>
<name>GATA7_ARATH</name>
<proteinExistence type="evidence at transcript level"/>
<reference key="1">
    <citation type="journal article" date="1999" name="Nature">
        <title>Sequence and analysis of chromosome 4 of the plant Arabidopsis thaliana.</title>
        <authorList>
            <person name="Mayer K.F.X."/>
            <person name="Schueller C."/>
            <person name="Wambutt R."/>
            <person name="Murphy G."/>
            <person name="Volckaert G."/>
            <person name="Pohl T."/>
            <person name="Duesterhoeft A."/>
            <person name="Stiekema W."/>
            <person name="Entian K.-D."/>
            <person name="Terryn N."/>
            <person name="Harris B."/>
            <person name="Ansorge W."/>
            <person name="Brandt P."/>
            <person name="Grivell L.A."/>
            <person name="Rieger M."/>
            <person name="Weichselgartner M."/>
            <person name="de Simone V."/>
            <person name="Obermaier B."/>
            <person name="Mache R."/>
            <person name="Mueller M."/>
            <person name="Kreis M."/>
            <person name="Delseny M."/>
            <person name="Puigdomenech P."/>
            <person name="Watson M."/>
            <person name="Schmidtheini T."/>
            <person name="Reichert B."/>
            <person name="Portetelle D."/>
            <person name="Perez-Alonso M."/>
            <person name="Boutry M."/>
            <person name="Bancroft I."/>
            <person name="Vos P."/>
            <person name="Hoheisel J."/>
            <person name="Zimmermann W."/>
            <person name="Wedler H."/>
            <person name="Ridley P."/>
            <person name="Langham S.-A."/>
            <person name="McCullagh B."/>
            <person name="Bilham L."/>
            <person name="Robben J."/>
            <person name="van der Schueren J."/>
            <person name="Grymonprez B."/>
            <person name="Chuang Y.-J."/>
            <person name="Vandenbussche F."/>
            <person name="Braeken M."/>
            <person name="Weltjens I."/>
            <person name="Voet M."/>
            <person name="Bastiaens I."/>
            <person name="Aert R."/>
            <person name="Defoor E."/>
            <person name="Weitzenegger T."/>
            <person name="Bothe G."/>
            <person name="Ramsperger U."/>
            <person name="Hilbert H."/>
            <person name="Braun M."/>
            <person name="Holzer E."/>
            <person name="Brandt A."/>
            <person name="Peters S."/>
            <person name="van Staveren M."/>
            <person name="Dirkse W."/>
            <person name="Mooijman P."/>
            <person name="Klein Lankhorst R."/>
            <person name="Rose M."/>
            <person name="Hauf J."/>
            <person name="Koetter P."/>
            <person name="Berneiser S."/>
            <person name="Hempel S."/>
            <person name="Feldpausch M."/>
            <person name="Lamberth S."/>
            <person name="Van den Daele H."/>
            <person name="De Keyser A."/>
            <person name="Buysshaert C."/>
            <person name="Gielen J."/>
            <person name="Villarroel R."/>
            <person name="De Clercq R."/>
            <person name="van Montagu M."/>
            <person name="Rogers J."/>
            <person name="Cronin A."/>
            <person name="Quail M.A."/>
            <person name="Bray-Allen S."/>
            <person name="Clark L."/>
            <person name="Doggett J."/>
            <person name="Hall S."/>
            <person name="Kay M."/>
            <person name="Lennard N."/>
            <person name="McLay K."/>
            <person name="Mayes R."/>
            <person name="Pettett A."/>
            <person name="Rajandream M.A."/>
            <person name="Lyne M."/>
            <person name="Benes V."/>
            <person name="Rechmann S."/>
            <person name="Borkova D."/>
            <person name="Bloecker H."/>
            <person name="Scharfe M."/>
            <person name="Grimm M."/>
            <person name="Loehnert T.-H."/>
            <person name="Dose S."/>
            <person name="de Haan M."/>
            <person name="Maarse A.C."/>
            <person name="Schaefer M."/>
            <person name="Mueller-Auer S."/>
            <person name="Gabel C."/>
            <person name="Fuchs M."/>
            <person name="Fartmann B."/>
            <person name="Granderath K."/>
            <person name="Dauner D."/>
            <person name="Herzl A."/>
            <person name="Neumann S."/>
            <person name="Argiriou A."/>
            <person name="Vitale D."/>
            <person name="Liguori R."/>
            <person name="Piravandi E."/>
            <person name="Massenet O."/>
            <person name="Quigley F."/>
            <person name="Clabauld G."/>
            <person name="Muendlein A."/>
            <person name="Felber R."/>
            <person name="Schnabl S."/>
            <person name="Hiller R."/>
            <person name="Schmidt W."/>
            <person name="Lecharny A."/>
            <person name="Aubourg S."/>
            <person name="Chefdor F."/>
            <person name="Cooke R."/>
            <person name="Berger C."/>
            <person name="Monfort A."/>
            <person name="Casacuberta E."/>
            <person name="Gibbons T."/>
            <person name="Weber N."/>
            <person name="Vandenbol M."/>
            <person name="Bargues M."/>
            <person name="Terol J."/>
            <person name="Torres A."/>
            <person name="Perez-Perez A."/>
            <person name="Purnelle B."/>
            <person name="Bent E."/>
            <person name="Johnson S."/>
            <person name="Tacon D."/>
            <person name="Jesse T."/>
            <person name="Heijnen L."/>
            <person name="Schwarz S."/>
            <person name="Scholler P."/>
            <person name="Heber S."/>
            <person name="Francs P."/>
            <person name="Bielke C."/>
            <person name="Frishman D."/>
            <person name="Haase D."/>
            <person name="Lemcke K."/>
            <person name="Mewes H.-W."/>
            <person name="Stocker S."/>
            <person name="Zaccaria P."/>
            <person name="Bevan M."/>
            <person name="Wilson R.K."/>
            <person name="de la Bastide M."/>
            <person name="Habermann K."/>
            <person name="Parnell L."/>
            <person name="Dedhia N."/>
            <person name="Gnoj L."/>
            <person name="Schutz K."/>
            <person name="Huang E."/>
            <person name="Spiegel L."/>
            <person name="Sekhon M."/>
            <person name="Murray J."/>
            <person name="Sheet P."/>
            <person name="Cordes M."/>
            <person name="Abu-Threideh J."/>
            <person name="Stoneking T."/>
            <person name="Kalicki J."/>
            <person name="Graves T."/>
            <person name="Harmon G."/>
            <person name="Edwards J."/>
            <person name="Latreille P."/>
            <person name="Courtney L."/>
            <person name="Cloud J."/>
            <person name="Abbott A."/>
            <person name="Scott K."/>
            <person name="Johnson D."/>
            <person name="Minx P."/>
            <person name="Bentley D."/>
            <person name="Fulton B."/>
            <person name="Miller N."/>
            <person name="Greco T."/>
            <person name="Kemp K."/>
            <person name="Kramer J."/>
            <person name="Fulton L."/>
            <person name="Mardis E."/>
            <person name="Dante M."/>
            <person name="Pepin K."/>
            <person name="Hillier L.W."/>
            <person name="Nelson J."/>
            <person name="Spieth J."/>
            <person name="Ryan E."/>
            <person name="Andrews S."/>
            <person name="Geisel C."/>
            <person name="Layman D."/>
            <person name="Du H."/>
            <person name="Ali J."/>
            <person name="Berghoff A."/>
            <person name="Jones K."/>
            <person name="Drone K."/>
            <person name="Cotton M."/>
            <person name="Joshu C."/>
            <person name="Antonoiu B."/>
            <person name="Zidanic M."/>
            <person name="Strong C."/>
            <person name="Sun H."/>
            <person name="Lamar B."/>
            <person name="Yordan C."/>
            <person name="Ma P."/>
            <person name="Zhong J."/>
            <person name="Preston R."/>
            <person name="Vil D."/>
            <person name="Shekher M."/>
            <person name="Matero A."/>
            <person name="Shah R."/>
            <person name="Swaby I.K."/>
            <person name="O'Shaughnessy A."/>
            <person name="Rodriguez M."/>
            <person name="Hoffman J."/>
            <person name="Till S."/>
            <person name="Granat S."/>
            <person name="Shohdy N."/>
            <person name="Hasegawa A."/>
            <person name="Hameed A."/>
            <person name="Lodhi M."/>
            <person name="Johnson A."/>
            <person name="Chen E."/>
            <person name="Marra M.A."/>
            <person name="Martienssen R."/>
            <person name="McCombie W.R."/>
        </authorList>
    </citation>
    <scope>NUCLEOTIDE SEQUENCE [LARGE SCALE GENOMIC DNA]</scope>
    <source>
        <strain>cv. Columbia</strain>
    </source>
</reference>
<reference key="2">
    <citation type="journal article" date="2017" name="Plant J.">
        <title>Araport11: a complete reannotation of the Arabidopsis thaliana reference genome.</title>
        <authorList>
            <person name="Cheng C.Y."/>
            <person name="Krishnakumar V."/>
            <person name="Chan A.P."/>
            <person name="Thibaud-Nissen F."/>
            <person name="Schobel S."/>
            <person name="Town C.D."/>
        </authorList>
    </citation>
    <scope>GENOME REANNOTATION</scope>
    <source>
        <strain>cv. Columbia</strain>
    </source>
</reference>
<reference key="3">
    <citation type="journal article" date="2003" name="Science">
        <title>Empirical analysis of transcriptional activity in the Arabidopsis genome.</title>
        <authorList>
            <person name="Yamada K."/>
            <person name="Lim J."/>
            <person name="Dale J.M."/>
            <person name="Chen H."/>
            <person name="Shinn P."/>
            <person name="Palm C.J."/>
            <person name="Southwick A.M."/>
            <person name="Wu H.C."/>
            <person name="Kim C.J."/>
            <person name="Nguyen M."/>
            <person name="Pham P.K."/>
            <person name="Cheuk R.F."/>
            <person name="Karlin-Newmann G."/>
            <person name="Liu S.X."/>
            <person name="Lam B."/>
            <person name="Sakano H."/>
            <person name="Wu T."/>
            <person name="Yu G."/>
            <person name="Miranda M."/>
            <person name="Quach H.L."/>
            <person name="Tripp M."/>
            <person name="Chang C.H."/>
            <person name="Lee J.M."/>
            <person name="Toriumi M.J."/>
            <person name="Chan M.M."/>
            <person name="Tang C.C."/>
            <person name="Onodera C.S."/>
            <person name="Deng J.M."/>
            <person name="Akiyama K."/>
            <person name="Ansari Y."/>
            <person name="Arakawa T."/>
            <person name="Banh J."/>
            <person name="Banno F."/>
            <person name="Bowser L."/>
            <person name="Brooks S.Y."/>
            <person name="Carninci P."/>
            <person name="Chao Q."/>
            <person name="Choy N."/>
            <person name="Enju A."/>
            <person name="Goldsmith A.D."/>
            <person name="Gurjal M."/>
            <person name="Hansen N.F."/>
            <person name="Hayashizaki Y."/>
            <person name="Johnson-Hopson C."/>
            <person name="Hsuan V.W."/>
            <person name="Iida K."/>
            <person name="Karnes M."/>
            <person name="Khan S."/>
            <person name="Koesema E."/>
            <person name="Ishida J."/>
            <person name="Jiang P.X."/>
            <person name="Jones T."/>
            <person name="Kawai J."/>
            <person name="Kamiya A."/>
            <person name="Meyers C."/>
            <person name="Nakajima M."/>
            <person name="Narusaka M."/>
            <person name="Seki M."/>
            <person name="Sakurai T."/>
            <person name="Satou M."/>
            <person name="Tamse R."/>
            <person name="Vaysberg M."/>
            <person name="Wallender E.K."/>
            <person name="Wong C."/>
            <person name="Yamamura Y."/>
            <person name="Yuan S."/>
            <person name="Shinozaki K."/>
            <person name="Davis R.W."/>
            <person name="Theologis A."/>
            <person name="Ecker J.R."/>
        </authorList>
    </citation>
    <scope>NUCLEOTIDE SEQUENCE [LARGE SCALE MRNA]</scope>
    <source>
        <strain>cv. Columbia</strain>
    </source>
</reference>
<reference key="4">
    <citation type="journal article" date="2004" name="Plant Physiol.">
        <title>The GATA family of transcription factors in Arabidopsis and rice.</title>
        <authorList>
            <person name="Reyes J.C."/>
            <person name="Muro-Pastor M.I."/>
            <person name="Florencio F.J."/>
        </authorList>
    </citation>
    <scope>GENE FAMILY ORGANIZATION</scope>
</reference>
<comment type="function">
    <text evidence="1">Transcriptional activator that specifically binds 5'-GATA-3' or 5'-GAT-3' motifs within gene promoters. May be involved in the regulation of some light-responsive genes (By similarity).</text>
</comment>
<comment type="subcellular location">
    <subcellularLocation>
        <location evidence="5">Nucleus</location>
    </subcellularLocation>
</comment>
<comment type="similarity">
    <text evidence="5">Belongs to the type IV zinc-finger family. Class A subfamily.</text>
</comment>
<gene>
    <name type="primary">GATA7</name>
    <name type="ordered locus">At4g36240</name>
    <name type="ORF">F23E13.130</name>
</gene>
<sequence>MECVEAFLGDFSVDDLLDLSNADTSLESSSSQRKEDEQEREKFKSFSDQSTRLSPPEDLLSFPGDAPVGDLEDLEWLSNFVEDSFSESYISSDFPVNPVASVEVRRQCVPVKPRSKRRRTNGRIWSMESPSPLLSTAVARRKKRGRQKVDASYGGVVQQQQLRRCCSHCGVQKTPQWRMGPLGAKTLCNACGVRFKSGRLLPEYRPACSPTFTNEIHSNSHRKVLELRLMKVADPARV</sequence>
<feature type="chain" id="PRO_0000083441" description="GATA transcription factor 7">
    <location>
        <begin position="1"/>
        <end position="238"/>
    </location>
</feature>
<feature type="zinc finger region" description="GATA-type" evidence="3">
    <location>
        <begin position="160"/>
        <end position="214"/>
    </location>
</feature>
<feature type="region of interest" description="Disordered" evidence="4">
    <location>
        <begin position="24"/>
        <end position="64"/>
    </location>
</feature>
<feature type="short sequence motif" description="Nuclear localization signal" evidence="2">
    <location>
        <begin position="112"/>
        <end position="119"/>
    </location>
</feature>
<feature type="compositionally biased region" description="Basic and acidic residues" evidence="4">
    <location>
        <begin position="32"/>
        <end position="45"/>
    </location>
</feature>
<keyword id="KW-0010">Activator</keyword>
<keyword id="KW-0238">DNA-binding</keyword>
<keyword id="KW-0479">Metal-binding</keyword>
<keyword id="KW-0539">Nucleus</keyword>
<keyword id="KW-1185">Reference proteome</keyword>
<keyword id="KW-0804">Transcription</keyword>
<keyword id="KW-0805">Transcription regulation</keyword>
<keyword id="KW-0862">Zinc</keyword>
<keyword id="KW-0863">Zinc-finger</keyword>
<accession>O65515</accession>
<protein>
    <recommendedName>
        <fullName>GATA transcription factor 7</fullName>
    </recommendedName>
</protein>
<evidence type="ECO:0000250" key="1"/>
<evidence type="ECO:0000255" key="2"/>
<evidence type="ECO:0000255" key="3">
    <source>
        <dbReference type="PROSITE-ProRule" id="PRU00094"/>
    </source>
</evidence>
<evidence type="ECO:0000256" key="4">
    <source>
        <dbReference type="SAM" id="MobiDB-lite"/>
    </source>
</evidence>
<evidence type="ECO:0000305" key="5"/>
<organism>
    <name type="scientific">Arabidopsis thaliana</name>
    <name type="common">Mouse-ear cress</name>
    <dbReference type="NCBI Taxonomy" id="3702"/>
    <lineage>
        <taxon>Eukaryota</taxon>
        <taxon>Viridiplantae</taxon>
        <taxon>Streptophyta</taxon>
        <taxon>Embryophyta</taxon>
        <taxon>Tracheophyta</taxon>
        <taxon>Spermatophyta</taxon>
        <taxon>Magnoliopsida</taxon>
        <taxon>eudicotyledons</taxon>
        <taxon>Gunneridae</taxon>
        <taxon>Pentapetalae</taxon>
        <taxon>rosids</taxon>
        <taxon>malvids</taxon>
        <taxon>Brassicales</taxon>
        <taxon>Brassicaceae</taxon>
        <taxon>Camelineae</taxon>
        <taxon>Arabidopsis</taxon>
    </lineage>
</organism>